<name>G3P_EREGS</name>
<feature type="chain" id="PRO_0000145537" description="Glyceraldehyde-3-phosphate dehydrogenase">
    <location>
        <begin position="1"/>
        <end position="331"/>
    </location>
</feature>
<feature type="active site" description="Nucleophile" evidence="2">
    <location>
        <position position="149"/>
    </location>
</feature>
<feature type="binding site" evidence="1">
    <location>
        <begin position="11"/>
        <end position="12"/>
    </location>
    <ligand>
        <name>NAD(+)</name>
        <dbReference type="ChEBI" id="CHEBI:57540"/>
    </ligand>
</feature>
<feature type="binding site" evidence="1">
    <location>
        <position position="33"/>
    </location>
    <ligand>
        <name>NAD(+)</name>
        <dbReference type="ChEBI" id="CHEBI:57540"/>
    </ligand>
</feature>
<feature type="binding site" evidence="1">
    <location>
        <position position="78"/>
    </location>
    <ligand>
        <name>NAD(+)</name>
        <dbReference type="ChEBI" id="CHEBI:57540"/>
    </ligand>
</feature>
<feature type="binding site" evidence="1">
    <location>
        <begin position="148"/>
        <end position="150"/>
    </location>
    <ligand>
        <name>D-glyceraldehyde 3-phosphate</name>
        <dbReference type="ChEBI" id="CHEBI:59776"/>
    </ligand>
</feature>
<feature type="binding site" evidence="1">
    <location>
        <position position="179"/>
    </location>
    <ligand>
        <name>D-glyceraldehyde 3-phosphate</name>
        <dbReference type="ChEBI" id="CHEBI:59776"/>
    </ligand>
</feature>
<feature type="binding site" evidence="1">
    <location>
        <begin position="208"/>
        <end position="209"/>
    </location>
    <ligand>
        <name>D-glyceraldehyde 3-phosphate</name>
        <dbReference type="ChEBI" id="CHEBI:59776"/>
    </ligand>
</feature>
<feature type="binding site" evidence="1">
    <location>
        <position position="231"/>
    </location>
    <ligand>
        <name>D-glyceraldehyde 3-phosphate</name>
        <dbReference type="ChEBI" id="CHEBI:59776"/>
    </ligand>
</feature>
<feature type="binding site" evidence="1">
    <location>
        <position position="313"/>
    </location>
    <ligand>
        <name>NAD(+)</name>
        <dbReference type="ChEBI" id="CHEBI:57540"/>
    </ligand>
</feature>
<feature type="site" description="Activates thiol group during catalysis" evidence="1">
    <location>
        <position position="176"/>
    </location>
</feature>
<sequence>MVKVAINGFGRIGRLVMRIALSRANVEVVAINDPFITVDYAAYMFKYDSTHGKYAGDVQYEGNTLVIDGKKIKVFQERDPAQLPWGEEGIDIAIDSTGVFKELDSAQKHIDAGAKKVVITAPSSTAPMFVMGVNEEKYAGETIVSNASCTTNCLAPLAKVIDEQFGIEEGLMTTVHSLTATQKTVDGPSMKDWRGGRTASGNIIPSSTGAAKAVGKVLPQLNGKLTGMAFRVPTVDVSVVDLTVKLNKETTYDEIKAAIKAASEGKLKGILGYTEDAVVSTDFLGDNNSSIFDASAGIMLSPKFVKLVSWYDNEYGYSTRVVDLVEHVAAN</sequence>
<reference key="1">
    <citation type="journal article" date="2004" name="Science">
        <title>The Ashbya gossypii genome as a tool for mapping the ancient Saccharomyces cerevisiae genome.</title>
        <authorList>
            <person name="Dietrich F.S."/>
            <person name="Voegeli S."/>
            <person name="Brachat S."/>
            <person name="Lerch A."/>
            <person name="Gates K."/>
            <person name="Steiner S."/>
            <person name="Mohr C."/>
            <person name="Poehlmann R."/>
            <person name="Luedi P."/>
            <person name="Choi S."/>
            <person name="Wing R.A."/>
            <person name="Flavier A."/>
            <person name="Gaffney T.D."/>
            <person name="Philippsen P."/>
        </authorList>
    </citation>
    <scope>NUCLEOTIDE SEQUENCE [LARGE SCALE GENOMIC DNA]</scope>
    <source>
        <strain>ATCC 10895 / CBS 109.51 / FGSC 9923 / NRRL Y-1056</strain>
    </source>
</reference>
<reference key="2">
    <citation type="journal article" date="2013" name="G3 (Bethesda)">
        <title>Genomes of Ashbya fungi isolated from insects reveal four mating-type loci, numerous translocations, lack of transposons, and distinct gene duplications.</title>
        <authorList>
            <person name="Dietrich F.S."/>
            <person name="Voegeli S."/>
            <person name="Kuo S."/>
            <person name="Philippsen P."/>
        </authorList>
    </citation>
    <scope>GENOME REANNOTATION</scope>
    <scope>SEQUENCE REVISION TO 9 AND 11</scope>
    <source>
        <strain>ATCC 10895 / CBS 109.51 / FGSC 9923 / NRRL Y-1056</strain>
    </source>
</reference>
<comment type="catalytic activity">
    <reaction evidence="2">
        <text>D-glyceraldehyde 3-phosphate + phosphate + NAD(+) = (2R)-3-phospho-glyceroyl phosphate + NADH + H(+)</text>
        <dbReference type="Rhea" id="RHEA:10300"/>
        <dbReference type="ChEBI" id="CHEBI:15378"/>
        <dbReference type="ChEBI" id="CHEBI:43474"/>
        <dbReference type="ChEBI" id="CHEBI:57540"/>
        <dbReference type="ChEBI" id="CHEBI:57604"/>
        <dbReference type="ChEBI" id="CHEBI:57945"/>
        <dbReference type="ChEBI" id="CHEBI:59776"/>
        <dbReference type="EC" id="1.2.1.12"/>
    </reaction>
</comment>
<comment type="pathway">
    <text>Carbohydrate degradation; glycolysis; pyruvate from D-glyceraldehyde 3-phosphate: step 1/5.</text>
</comment>
<comment type="subunit">
    <text evidence="1">Homotetramer.</text>
</comment>
<comment type="subcellular location">
    <subcellularLocation>
        <location evidence="1">Cytoplasm</location>
    </subcellularLocation>
</comment>
<comment type="similarity">
    <text evidence="3">Belongs to the glyceraldehyde-3-phosphate dehydrogenase family.</text>
</comment>
<keyword id="KW-0963">Cytoplasm</keyword>
<keyword id="KW-0324">Glycolysis</keyword>
<keyword id="KW-0520">NAD</keyword>
<keyword id="KW-0560">Oxidoreductase</keyword>
<keyword id="KW-1185">Reference proteome</keyword>
<accession>Q757I2</accession>
<gene>
    <name type="primary">GPD</name>
    <name type="ordered locus">AER031C</name>
</gene>
<evidence type="ECO:0000250" key="1"/>
<evidence type="ECO:0000255" key="2">
    <source>
        <dbReference type="PROSITE-ProRule" id="PRU10009"/>
    </source>
</evidence>
<evidence type="ECO:0000305" key="3"/>
<proteinExistence type="inferred from homology"/>
<dbReference type="EC" id="1.2.1.12"/>
<dbReference type="EMBL" id="AE016818">
    <property type="protein sequence ID" value="AAS52715.2"/>
    <property type="molecule type" value="Genomic_DNA"/>
</dbReference>
<dbReference type="RefSeq" id="NP_984891.2">
    <property type="nucleotide sequence ID" value="NM_210245.2"/>
</dbReference>
<dbReference type="SMR" id="Q757I2"/>
<dbReference type="FunCoup" id="Q757I2">
    <property type="interactions" value="1359"/>
</dbReference>
<dbReference type="STRING" id="284811.Q757I2"/>
<dbReference type="EnsemblFungi" id="AAS52715">
    <property type="protein sequence ID" value="AAS52715"/>
    <property type="gene ID" value="AGOS_AER031C"/>
</dbReference>
<dbReference type="GeneID" id="4621093"/>
<dbReference type="KEGG" id="ago:AGOS_AER031C"/>
<dbReference type="eggNOG" id="KOG0657">
    <property type="taxonomic scope" value="Eukaryota"/>
</dbReference>
<dbReference type="HOGENOM" id="CLU_030140_0_3_1"/>
<dbReference type="InParanoid" id="Q757I2"/>
<dbReference type="OMA" id="TCQMIRL"/>
<dbReference type="OrthoDB" id="1152826at2759"/>
<dbReference type="UniPathway" id="UPA00109">
    <property type="reaction ID" value="UER00184"/>
</dbReference>
<dbReference type="Proteomes" id="UP000000591">
    <property type="component" value="Chromosome V"/>
</dbReference>
<dbReference type="GO" id="GO:0005829">
    <property type="term" value="C:cytosol"/>
    <property type="evidence" value="ECO:0000318"/>
    <property type="project" value="GO_Central"/>
</dbReference>
<dbReference type="GO" id="GO:0030312">
    <property type="term" value="C:external encapsulating structure"/>
    <property type="evidence" value="ECO:0007669"/>
    <property type="project" value="UniProtKB-ARBA"/>
</dbReference>
<dbReference type="GO" id="GO:0004365">
    <property type="term" value="F:glyceraldehyde-3-phosphate dehydrogenase (NAD+) (phosphorylating) activity"/>
    <property type="evidence" value="ECO:0000318"/>
    <property type="project" value="GO_Central"/>
</dbReference>
<dbReference type="GO" id="GO:0051287">
    <property type="term" value="F:NAD binding"/>
    <property type="evidence" value="ECO:0007669"/>
    <property type="project" value="InterPro"/>
</dbReference>
<dbReference type="GO" id="GO:0050661">
    <property type="term" value="F:NADP binding"/>
    <property type="evidence" value="ECO:0007669"/>
    <property type="project" value="InterPro"/>
</dbReference>
<dbReference type="GO" id="GO:0006006">
    <property type="term" value="P:glucose metabolic process"/>
    <property type="evidence" value="ECO:0007669"/>
    <property type="project" value="InterPro"/>
</dbReference>
<dbReference type="GO" id="GO:0006096">
    <property type="term" value="P:glycolytic process"/>
    <property type="evidence" value="ECO:0000318"/>
    <property type="project" value="GO_Central"/>
</dbReference>
<dbReference type="CDD" id="cd18126">
    <property type="entry name" value="GAPDH_I_C"/>
    <property type="match status" value="1"/>
</dbReference>
<dbReference type="CDD" id="cd05214">
    <property type="entry name" value="GAPDH_I_N"/>
    <property type="match status" value="1"/>
</dbReference>
<dbReference type="FunFam" id="3.30.360.10:FF:000001">
    <property type="entry name" value="Glyceraldehyde-3-phosphate dehydrogenase"/>
    <property type="match status" value="1"/>
</dbReference>
<dbReference type="FunFam" id="3.40.50.720:FF:000020">
    <property type="entry name" value="Glyceraldehyde-3-phosphate dehydrogenase"/>
    <property type="match status" value="1"/>
</dbReference>
<dbReference type="Gene3D" id="3.30.360.10">
    <property type="entry name" value="Dihydrodipicolinate Reductase, domain 2"/>
    <property type="match status" value="1"/>
</dbReference>
<dbReference type="Gene3D" id="3.40.50.720">
    <property type="entry name" value="NAD(P)-binding Rossmann-like Domain"/>
    <property type="match status" value="1"/>
</dbReference>
<dbReference type="InterPro" id="IPR020831">
    <property type="entry name" value="GlycerAld/Erythrose_P_DH"/>
</dbReference>
<dbReference type="InterPro" id="IPR020830">
    <property type="entry name" value="GlycerAld_3-P_DH_AS"/>
</dbReference>
<dbReference type="InterPro" id="IPR020829">
    <property type="entry name" value="GlycerAld_3-P_DH_cat"/>
</dbReference>
<dbReference type="InterPro" id="IPR020828">
    <property type="entry name" value="GlycerAld_3-P_DH_NAD(P)-bd"/>
</dbReference>
<dbReference type="InterPro" id="IPR006424">
    <property type="entry name" value="Glyceraldehyde-3-P_DH_1"/>
</dbReference>
<dbReference type="InterPro" id="IPR036291">
    <property type="entry name" value="NAD(P)-bd_dom_sf"/>
</dbReference>
<dbReference type="NCBIfam" id="TIGR01534">
    <property type="entry name" value="GAPDH-I"/>
    <property type="match status" value="1"/>
</dbReference>
<dbReference type="PANTHER" id="PTHR10836">
    <property type="entry name" value="GLYCERALDEHYDE 3-PHOSPHATE DEHYDROGENASE"/>
    <property type="match status" value="1"/>
</dbReference>
<dbReference type="PANTHER" id="PTHR10836:SF76">
    <property type="entry name" value="GLYCERALDEHYDE-3-PHOSPHATE DEHYDROGENASE-RELATED"/>
    <property type="match status" value="1"/>
</dbReference>
<dbReference type="Pfam" id="PF02800">
    <property type="entry name" value="Gp_dh_C"/>
    <property type="match status" value="1"/>
</dbReference>
<dbReference type="Pfam" id="PF00044">
    <property type="entry name" value="Gp_dh_N"/>
    <property type="match status" value="1"/>
</dbReference>
<dbReference type="PIRSF" id="PIRSF000149">
    <property type="entry name" value="GAP_DH"/>
    <property type="match status" value="1"/>
</dbReference>
<dbReference type="PRINTS" id="PR00078">
    <property type="entry name" value="G3PDHDRGNASE"/>
</dbReference>
<dbReference type="SMART" id="SM00846">
    <property type="entry name" value="Gp_dh_N"/>
    <property type="match status" value="1"/>
</dbReference>
<dbReference type="SUPFAM" id="SSF55347">
    <property type="entry name" value="Glyceraldehyde-3-phosphate dehydrogenase-like, C-terminal domain"/>
    <property type="match status" value="1"/>
</dbReference>
<dbReference type="SUPFAM" id="SSF51735">
    <property type="entry name" value="NAD(P)-binding Rossmann-fold domains"/>
    <property type="match status" value="1"/>
</dbReference>
<dbReference type="PROSITE" id="PS00071">
    <property type="entry name" value="GAPDH"/>
    <property type="match status" value="1"/>
</dbReference>
<protein>
    <recommendedName>
        <fullName>Glyceraldehyde-3-phosphate dehydrogenase</fullName>
        <shortName>GAPDH</shortName>
        <ecNumber>1.2.1.12</ecNumber>
    </recommendedName>
</protein>
<organism>
    <name type="scientific">Eremothecium gossypii (strain ATCC 10895 / CBS 109.51 / FGSC 9923 / NRRL Y-1056)</name>
    <name type="common">Yeast</name>
    <name type="synonym">Ashbya gossypii</name>
    <dbReference type="NCBI Taxonomy" id="284811"/>
    <lineage>
        <taxon>Eukaryota</taxon>
        <taxon>Fungi</taxon>
        <taxon>Dikarya</taxon>
        <taxon>Ascomycota</taxon>
        <taxon>Saccharomycotina</taxon>
        <taxon>Saccharomycetes</taxon>
        <taxon>Saccharomycetales</taxon>
        <taxon>Saccharomycetaceae</taxon>
        <taxon>Eremothecium</taxon>
    </lineage>
</organism>